<dbReference type="EMBL" id="AB035129">
    <property type="protein sequence ID" value="BAB82485.1"/>
    <property type="molecule type" value="Genomic_DNA"/>
</dbReference>
<dbReference type="SMR" id="Q8VV76"/>
<dbReference type="GO" id="GO:0005886">
    <property type="term" value="C:plasma membrane"/>
    <property type="evidence" value="ECO:0007669"/>
    <property type="project" value="UniProtKB-SubCell"/>
</dbReference>
<dbReference type="GO" id="GO:0045259">
    <property type="term" value="C:proton-transporting ATP synthase complex"/>
    <property type="evidence" value="ECO:0007669"/>
    <property type="project" value="UniProtKB-KW"/>
</dbReference>
<dbReference type="GO" id="GO:0005524">
    <property type="term" value="F:ATP binding"/>
    <property type="evidence" value="ECO:0007669"/>
    <property type="project" value="UniProtKB-UniRule"/>
</dbReference>
<dbReference type="GO" id="GO:0046933">
    <property type="term" value="F:proton-transporting ATP synthase activity, rotational mechanism"/>
    <property type="evidence" value="ECO:0007669"/>
    <property type="project" value="UniProtKB-UniRule"/>
</dbReference>
<dbReference type="CDD" id="cd12152">
    <property type="entry name" value="F1-ATPase_delta"/>
    <property type="match status" value="1"/>
</dbReference>
<dbReference type="FunFam" id="1.20.5.440:FF:000001">
    <property type="entry name" value="ATP synthase epsilon chain"/>
    <property type="match status" value="1"/>
</dbReference>
<dbReference type="FunFam" id="2.60.15.10:FF:000001">
    <property type="entry name" value="ATP synthase epsilon chain"/>
    <property type="match status" value="1"/>
</dbReference>
<dbReference type="Gene3D" id="1.20.5.440">
    <property type="entry name" value="ATP synthase delta/epsilon subunit, C-terminal domain"/>
    <property type="match status" value="1"/>
</dbReference>
<dbReference type="Gene3D" id="2.60.15.10">
    <property type="entry name" value="F0F1 ATP synthase delta/epsilon subunit, N-terminal"/>
    <property type="match status" value="1"/>
</dbReference>
<dbReference type="HAMAP" id="MF_00530">
    <property type="entry name" value="ATP_synth_epsil_bac"/>
    <property type="match status" value="1"/>
</dbReference>
<dbReference type="InterPro" id="IPR036794">
    <property type="entry name" value="ATP_F1_dsu/esu_C_sf"/>
</dbReference>
<dbReference type="InterPro" id="IPR001469">
    <property type="entry name" value="ATP_synth_F1_dsu/esu"/>
</dbReference>
<dbReference type="InterPro" id="IPR020546">
    <property type="entry name" value="ATP_synth_F1_dsu/esu_N"/>
</dbReference>
<dbReference type="InterPro" id="IPR020547">
    <property type="entry name" value="ATP_synth_F1_esu_C"/>
</dbReference>
<dbReference type="InterPro" id="IPR036771">
    <property type="entry name" value="ATPsynth_dsu/esu_N"/>
</dbReference>
<dbReference type="NCBIfam" id="TIGR01216">
    <property type="entry name" value="ATP_synt_epsi"/>
    <property type="match status" value="1"/>
</dbReference>
<dbReference type="NCBIfam" id="NF001847">
    <property type="entry name" value="PRK00571.1-4"/>
    <property type="match status" value="1"/>
</dbReference>
<dbReference type="PANTHER" id="PTHR13822">
    <property type="entry name" value="ATP SYNTHASE DELTA/EPSILON CHAIN"/>
    <property type="match status" value="1"/>
</dbReference>
<dbReference type="PANTHER" id="PTHR13822:SF10">
    <property type="entry name" value="ATP SYNTHASE EPSILON CHAIN, CHLOROPLASTIC"/>
    <property type="match status" value="1"/>
</dbReference>
<dbReference type="Pfam" id="PF00401">
    <property type="entry name" value="ATP-synt_DE"/>
    <property type="match status" value="1"/>
</dbReference>
<dbReference type="Pfam" id="PF02823">
    <property type="entry name" value="ATP-synt_DE_N"/>
    <property type="match status" value="1"/>
</dbReference>
<dbReference type="SUPFAM" id="SSF46604">
    <property type="entry name" value="Epsilon subunit of F1F0-ATP synthase C-terminal domain"/>
    <property type="match status" value="1"/>
</dbReference>
<dbReference type="SUPFAM" id="SSF51344">
    <property type="entry name" value="Epsilon subunit of F1F0-ATP synthase N-terminal domain"/>
    <property type="match status" value="1"/>
</dbReference>
<protein>
    <recommendedName>
        <fullName evidence="1">ATP synthase epsilon chain</fullName>
    </recommendedName>
    <alternativeName>
        <fullName evidence="1">ATP synthase F1 sector epsilon subunit</fullName>
    </alternativeName>
    <alternativeName>
        <fullName evidence="1">F-ATPase epsilon subunit</fullName>
    </alternativeName>
</protein>
<feature type="chain" id="PRO_0000188124" description="ATP synthase epsilon chain">
    <location>
        <begin position="1"/>
        <end position="140"/>
    </location>
</feature>
<evidence type="ECO:0000255" key="1">
    <source>
        <dbReference type="HAMAP-Rule" id="MF_00530"/>
    </source>
</evidence>
<gene>
    <name evidence="1" type="primary">atpC</name>
</gene>
<keyword id="KW-0066">ATP synthesis</keyword>
<keyword id="KW-0997">Cell inner membrane</keyword>
<keyword id="KW-1003">Cell membrane</keyword>
<keyword id="KW-0139">CF(1)</keyword>
<keyword id="KW-0375">Hydrogen ion transport</keyword>
<keyword id="KW-0406">Ion transport</keyword>
<keyword id="KW-0472">Membrane</keyword>
<keyword id="KW-0813">Transport</keyword>
<accession>Q8VV76</accession>
<comment type="function">
    <text evidence="1">Produces ATP from ADP in the presence of a proton gradient across the membrane.</text>
</comment>
<comment type="subunit">
    <text>F-type ATPases have 2 components, CF(1) - the catalytic core - and CF(0) - the membrane proton channel. CF(1) has five subunits: alpha(3), beta(3), gamma(1), delta(1), epsilon(1). CF(0) has three main subunits: a, b and c.</text>
</comment>
<comment type="subcellular location">
    <subcellularLocation>
        <location evidence="1">Cell inner membrane</location>
        <topology evidence="1">Peripheral membrane protein</topology>
    </subcellularLocation>
</comment>
<comment type="similarity">
    <text evidence="1">Belongs to the ATPase epsilon chain family.</text>
</comment>
<name>ATPE_COLMA</name>
<sequence length="140" mass="14628">MALLTVNLNVVSAEESLFSGSIKSLQITGSEGELGIMPGHAPLLTSLKPGMALITKKDGSEEVIYLSGGMLEVQPNNVTVLADIATRAADLDEQAALEAKQRAEENMNANGADVDFAVAAAQLARAVAQLRVIQATSKHN</sequence>
<proteinExistence type="inferred from homology"/>
<reference key="1">
    <citation type="submission" date="1999-11" db="EMBL/GenBank/DDBJ databases">
        <title>Colwellia maris atp operon, complete sequence.</title>
        <authorList>
            <person name="Takada Y."/>
            <person name="Takiya S."/>
        </authorList>
    </citation>
    <scope>NUCLEOTIDE SEQUENCE [GENOMIC DNA]</scope>
</reference>
<organism>
    <name type="scientific">Colwellia maris</name>
    <dbReference type="NCBI Taxonomy" id="77524"/>
    <lineage>
        <taxon>Bacteria</taxon>
        <taxon>Pseudomonadati</taxon>
        <taxon>Pseudomonadota</taxon>
        <taxon>Gammaproteobacteria</taxon>
        <taxon>Alteromonadales</taxon>
        <taxon>Colwelliaceae</taxon>
        <taxon>Colwellia</taxon>
    </lineage>
</organism>